<organism>
    <name type="scientific">Escherichia coli (strain K12)</name>
    <dbReference type="NCBI Taxonomy" id="83333"/>
    <lineage>
        <taxon>Bacteria</taxon>
        <taxon>Pseudomonadati</taxon>
        <taxon>Pseudomonadota</taxon>
        <taxon>Gammaproteobacteria</taxon>
        <taxon>Enterobacterales</taxon>
        <taxon>Enterobacteriaceae</taxon>
        <taxon>Escherichia</taxon>
    </lineage>
</organism>
<keyword id="KW-0997">Cell inner membrane</keyword>
<keyword id="KW-1003">Cell membrane</keyword>
<keyword id="KW-0249">Electron transport</keyword>
<keyword id="KW-0472">Membrane</keyword>
<keyword id="KW-1185">Reference proteome</keyword>
<keyword id="KW-1278">Translocase</keyword>
<keyword id="KW-0812">Transmembrane</keyword>
<keyword id="KW-1133">Transmembrane helix</keyword>
<keyword id="KW-0813">Transport</keyword>
<proteinExistence type="evidence at protein level"/>
<name>RSXA_ECOLI</name>
<protein>
    <recommendedName>
        <fullName evidence="1 6">Ion-translocating oxidoreductase complex subunit A</fullName>
        <ecNumber evidence="1 6">7.-.-.-</ecNumber>
    </recommendedName>
    <alternativeName>
        <fullName evidence="1 6">Rsx electron transport complex subunit A</fullName>
    </alternativeName>
</protein>
<feature type="chain" id="PRO_0000214289" description="Ion-translocating oxidoreductase complex subunit A">
    <location>
        <begin position="1"/>
        <end position="193"/>
    </location>
</feature>
<feature type="topological domain" description="Periplasmic" evidence="6">
    <location>
        <begin position="1"/>
        <end position="4"/>
    </location>
</feature>
<feature type="transmembrane region" description="Helical" evidence="1">
    <location>
        <begin position="5"/>
        <end position="25"/>
    </location>
</feature>
<feature type="topological domain" description="Cytoplasmic" evidence="2">
    <location>
        <begin position="26"/>
        <end position="38"/>
    </location>
</feature>
<feature type="transmembrane region" description="Helical" evidence="1">
    <location>
        <begin position="39"/>
        <end position="59"/>
    </location>
</feature>
<feature type="topological domain" description="Periplasmic" evidence="2">
    <location>
        <begin position="60"/>
        <end position="62"/>
    </location>
</feature>
<feature type="transmembrane region" description="Helical" evidence="1">
    <location>
        <begin position="63"/>
        <end position="83"/>
    </location>
</feature>
<feature type="topological domain" description="Cytoplasmic" evidence="2">
    <location>
        <begin position="84"/>
        <end position="101"/>
    </location>
</feature>
<feature type="transmembrane region" description="Helical" evidence="1">
    <location>
        <begin position="102"/>
        <end position="122"/>
    </location>
</feature>
<feature type="topological domain" description="Periplasmic" evidence="2">
    <location>
        <begin position="123"/>
        <end position="133"/>
    </location>
</feature>
<feature type="transmembrane region" description="Helical" evidence="1">
    <location>
        <begin position="134"/>
        <end position="154"/>
    </location>
</feature>
<feature type="topological domain" description="Cytoplasmic" evidence="2">
    <location>
        <begin position="155"/>
        <end position="170"/>
    </location>
</feature>
<feature type="transmembrane region" description="Helical" evidence="1">
    <location>
        <begin position="171"/>
        <end position="191"/>
    </location>
</feature>
<feature type="topological domain" description="Periplasmic" evidence="2 4">
    <location>
        <begin position="192"/>
        <end position="193"/>
    </location>
</feature>
<accession>P0A766</accession>
<accession>P76181</accession>
<accession>Q2MB70</accession>
<reference key="1">
    <citation type="journal article" date="1997" name="Science">
        <title>The complete genome sequence of Escherichia coli K-12.</title>
        <authorList>
            <person name="Blattner F.R."/>
            <person name="Plunkett G. III"/>
            <person name="Bloch C.A."/>
            <person name="Perna N.T."/>
            <person name="Burland V."/>
            <person name="Riley M."/>
            <person name="Collado-Vides J."/>
            <person name="Glasner J.D."/>
            <person name="Rode C.K."/>
            <person name="Mayhew G.F."/>
            <person name="Gregor J."/>
            <person name="Davis N.W."/>
            <person name="Kirkpatrick H.A."/>
            <person name="Goeden M.A."/>
            <person name="Rose D.J."/>
            <person name="Mau B."/>
            <person name="Shao Y."/>
        </authorList>
    </citation>
    <scope>NUCLEOTIDE SEQUENCE [LARGE SCALE GENOMIC DNA]</scope>
    <source>
        <strain>K12 / MG1655 / ATCC 47076</strain>
    </source>
</reference>
<reference key="2">
    <citation type="journal article" date="2006" name="Mol. Syst. Biol.">
        <title>Highly accurate genome sequences of Escherichia coli K-12 strains MG1655 and W3110.</title>
        <authorList>
            <person name="Hayashi K."/>
            <person name="Morooka N."/>
            <person name="Yamamoto Y."/>
            <person name="Fujita K."/>
            <person name="Isono K."/>
            <person name="Choi S."/>
            <person name="Ohtsubo E."/>
            <person name="Baba T."/>
            <person name="Wanner B.L."/>
            <person name="Mori H."/>
            <person name="Horiuchi T."/>
        </authorList>
    </citation>
    <scope>NUCLEOTIDE SEQUENCE [LARGE SCALE GENOMIC DNA]</scope>
    <source>
        <strain>K12 / W3110 / ATCC 27325 / DSM 5911</strain>
    </source>
</reference>
<reference key="3">
    <citation type="journal article" date="1999" name="Proc. Natl. Acad. Sci. U.S.A.">
        <title>Divergent evolution of membrane protein topology: the Escherichia coli RnfA and RnfE homologues.</title>
        <authorList>
            <person name="Saeaef A."/>
            <person name="Johansson M."/>
            <person name="Wallin E."/>
            <person name="von Heijne G."/>
        </authorList>
    </citation>
    <scope>TOPOLOGY</scope>
    <source>
        <strain>K12 / JM109 / ATCC 53323</strain>
    </source>
</reference>
<reference key="4">
    <citation type="journal article" date="2003" name="EMBO J.">
        <title>A reducing system of the superoxide sensor SoxR in Escherichia coli.</title>
        <authorList>
            <person name="Koo M.S."/>
            <person name="Lee J.H."/>
            <person name="Rah S.Y."/>
            <person name="Yeo W.S."/>
            <person name="Lee J.W."/>
            <person name="Lee K.L."/>
            <person name="Koh Y.S."/>
            <person name="Kang S.O."/>
            <person name="Roe J.H."/>
        </authorList>
    </citation>
    <scope>FUNCTION</scope>
    <scope>SUBUNIT</scope>
    <scope>GENE NAME</scope>
</reference>
<reference key="5">
    <citation type="journal article" date="2005" name="Science">
        <title>Global topology analysis of the Escherichia coli inner membrane proteome.</title>
        <authorList>
            <person name="Daley D.O."/>
            <person name="Rapp M."/>
            <person name="Granseth E."/>
            <person name="Melen K."/>
            <person name="Drew D."/>
            <person name="von Heijne G."/>
        </authorList>
    </citation>
    <scope>TOPOLOGY [LARGE SCALE ANALYSIS]</scope>
    <scope>SUBCELLULAR LOCATION</scope>
    <source>
        <strain>K12 / MG1655 / ATCC 47076</strain>
    </source>
</reference>
<evidence type="ECO:0000255" key="1">
    <source>
        <dbReference type="HAMAP-Rule" id="MF_00459"/>
    </source>
</evidence>
<evidence type="ECO:0000269" key="2">
    <source>
    </source>
</evidence>
<evidence type="ECO:0000269" key="3">
    <source>
    </source>
</evidence>
<evidence type="ECO:0000269" key="4">
    <source>
    </source>
</evidence>
<evidence type="ECO:0000303" key="5">
    <source>
    </source>
</evidence>
<evidence type="ECO:0000305" key="6"/>
<evidence type="ECO:0000305" key="7">
    <source>
    </source>
</evidence>
<gene>
    <name evidence="1 5" type="primary">rsxA</name>
    <name type="synonym">rnfA</name>
    <name type="synonym">ydgL</name>
    <name type="ordered locus">b1627</name>
    <name type="ordered locus">JW1619</name>
</gene>
<dbReference type="EC" id="7.-.-.-" evidence="1 6"/>
<dbReference type="EMBL" id="U00096">
    <property type="protein sequence ID" value="AAC74699.1"/>
    <property type="molecule type" value="Genomic_DNA"/>
</dbReference>
<dbReference type="EMBL" id="AP009048">
    <property type="protein sequence ID" value="BAE76486.1"/>
    <property type="molecule type" value="Genomic_DNA"/>
</dbReference>
<dbReference type="PIR" id="E64919">
    <property type="entry name" value="E64919"/>
</dbReference>
<dbReference type="RefSeq" id="NP_416144.1">
    <property type="nucleotide sequence ID" value="NC_000913.3"/>
</dbReference>
<dbReference type="RefSeq" id="WP_000133193.1">
    <property type="nucleotide sequence ID" value="NZ_STEB01000003.1"/>
</dbReference>
<dbReference type="SMR" id="P0A766"/>
<dbReference type="BioGRID" id="4261327">
    <property type="interactions" value="41"/>
</dbReference>
<dbReference type="FunCoup" id="P0A766">
    <property type="interactions" value="106"/>
</dbReference>
<dbReference type="STRING" id="511145.b1627"/>
<dbReference type="TCDB" id="3.D.6.1.4">
    <property type="family name" value="the ion (h(+) or na(+))-translocating nadh:ferredoxin oxidoreductase (nfo or rnf) family"/>
</dbReference>
<dbReference type="PaxDb" id="511145-b1627"/>
<dbReference type="EnsemblBacteria" id="AAC74699">
    <property type="protein sequence ID" value="AAC74699"/>
    <property type="gene ID" value="b1627"/>
</dbReference>
<dbReference type="GeneID" id="89516393"/>
<dbReference type="GeneID" id="946148"/>
<dbReference type="KEGG" id="ecj:JW1619"/>
<dbReference type="KEGG" id="eco:b1627"/>
<dbReference type="KEGG" id="ecoc:C3026_09350"/>
<dbReference type="PATRIC" id="fig|1411691.4.peg.634"/>
<dbReference type="EchoBASE" id="EB3692"/>
<dbReference type="eggNOG" id="COG4657">
    <property type="taxonomic scope" value="Bacteria"/>
</dbReference>
<dbReference type="HOGENOM" id="CLU_095255_1_0_6"/>
<dbReference type="InParanoid" id="P0A766"/>
<dbReference type="OMA" id="ILGLCPF"/>
<dbReference type="OrthoDB" id="9803631at2"/>
<dbReference type="PhylomeDB" id="P0A766"/>
<dbReference type="BioCyc" id="EcoCyc:G6871-MONOMER"/>
<dbReference type="PRO" id="PR:P0A766"/>
<dbReference type="Proteomes" id="UP000000625">
    <property type="component" value="Chromosome"/>
</dbReference>
<dbReference type="GO" id="GO:1990204">
    <property type="term" value="C:oxidoreductase complex"/>
    <property type="evidence" value="ECO:0000314"/>
    <property type="project" value="EcoCyc"/>
</dbReference>
<dbReference type="GO" id="GO:0005886">
    <property type="term" value="C:plasma membrane"/>
    <property type="evidence" value="ECO:0000314"/>
    <property type="project" value="EcoCyc"/>
</dbReference>
<dbReference type="GO" id="GO:0098797">
    <property type="term" value="C:plasma membrane protein complex"/>
    <property type="evidence" value="ECO:0000314"/>
    <property type="project" value="EcoCyc"/>
</dbReference>
<dbReference type="GO" id="GO:0022900">
    <property type="term" value="P:electron transport chain"/>
    <property type="evidence" value="ECO:0007669"/>
    <property type="project" value="UniProtKB-UniRule"/>
</dbReference>
<dbReference type="HAMAP" id="MF_00459">
    <property type="entry name" value="RsxA_RnfA"/>
    <property type="match status" value="1"/>
</dbReference>
<dbReference type="InterPro" id="IPR011293">
    <property type="entry name" value="Ion_transpt_RnfA/RsxA"/>
</dbReference>
<dbReference type="InterPro" id="IPR003667">
    <property type="entry name" value="NqrDE/RnfAE"/>
</dbReference>
<dbReference type="InterPro" id="IPR050133">
    <property type="entry name" value="NqrDE/RnfAE_oxidrdctase"/>
</dbReference>
<dbReference type="NCBIfam" id="NF003481">
    <property type="entry name" value="PRK05151.1"/>
    <property type="match status" value="1"/>
</dbReference>
<dbReference type="NCBIfam" id="TIGR01943">
    <property type="entry name" value="rnfA"/>
    <property type="match status" value="1"/>
</dbReference>
<dbReference type="PANTHER" id="PTHR30335">
    <property type="entry name" value="INTEGRAL MEMBRANE PROTEIN OF SOXR-REDUCING COMPLEX"/>
    <property type="match status" value="1"/>
</dbReference>
<dbReference type="PANTHER" id="PTHR30335:SF0">
    <property type="entry name" value="ION-TRANSLOCATING OXIDOREDUCTASE COMPLEX SUBUNIT A"/>
    <property type="match status" value="1"/>
</dbReference>
<dbReference type="Pfam" id="PF02508">
    <property type="entry name" value="Rnf-Nqr"/>
    <property type="match status" value="1"/>
</dbReference>
<dbReference type="PIRSF" id="PIRSF006102">
    <property type="entry name" value="NQR_DE"/>
    <property type="match status" value="1"/>
</dbReference>
<sequence>MTDYLLLFVGTVLVNNFVLVKFLGLCPFMGVSKKLETAMGMGLATTFVMTLASICAWLIDTWILIPLNLIYLRTLAFILVIAVVVQFTEMVVRKTSPVLYRLLGIFLPLITTNCAVLGVALLNINLGHNFLQSALYGFSAAVGFSLVMVLFAAIRERLAVADVPAPFRGNAIALITAGLMSLAFMGFSGLVKL</sequence>
<comment type="function">
    <text evidence="1 3">Part of a membrane-bound complex that couples electron transfer with translocation of ions across the membrane (By similarity). Required to maintain the reduced state of SoxR. Probably transfers electron from NAD(P)H to SoxR (PubMed:12773378).</text>
</comment>
<comment type="subunit">
    <text evidence="1 7">The complex is composed of six subunits: RsxA, RsxB, RsxC, RsxD, RsxE and RsxG.</text>
</comment>
<comment type="subcellular location">
    <subcellularLocation>
        <location evidence="1 4">Cell inner membrane</location>
        <topology evidence="1">Multi-pass membrane protein</topology>
    </subcellularLocation>
</comment>
<comment type="similarity">
    <text evidence="1">Belongs to the NqrDE/RnfAE family.</text>
</comment>